<evidence type="ECO:0000255" key="1">
    <source>
        <dbReference type="HAMAP-Rule" id="MF_01422"/>
    </source>
</evidence>
<evidence type="ECO:0000256" key="2">
    <source>
        <dbReference type="SAM" id="MobiDB-lite"/>
    </source>
</evidence>
<feature type="signal peptide" evidence="1">
    <location>
        <begin position="1"/>
        <end position="21"/>
    </location>
</feature>
<feature type="chain" id="PRO_1000184859" description="Multidrug resistance protein MdtA">
    <location>
        <begin position="22"/>
        <end position="415"/>
    </location>
</feature>
<feature type="region of interest" description="Disordered" evidence="2">
    <location>
        <begin position="32"/>
        <end position="60"/>
    </location>
</feature>
<feature type="region of interest" description="Disordered" evidence="2">
    <location>
        <begin position="392"/>
        <end position="415"/>
    </location>
</feature>
<feature type="compositionally biased region" description="Basic and acidic residues" evidence="2">
    <location>
        <begin position="399"/>
        <end position="415"/>
    </location>
</feature>
<sequence length="415" mass="44464">MKGSYKSRWVIVIVVVIAAIAAFWFWQGRNDSRSAAPGATKQAQQSPAGGRRGMRSGPLAPVQAATAVEQAVPRYLTGLGTITAANTVTVRSRVDGQLIALHFQEGQQVKAGDLLAEIDPSQFKVALAQAQGQLAKDKATLANARRDLARYQQLAKTNLVSRQELDAQQALVSETEGTIKADEASVASAQLQLDWSRITAPVDGRVGLKQVDVGNQISSGDTTGIVVITQTHPIDLVFTLPESDIATVVQAQKAGKPLVVEAWDRTNSKKLSEGTLLSLDNQIDATTGTIKVKARFNNQDDALFPNQFVNARMLVDTEQNAVVIPTAALQMGNEGHFVWVLNSENKVSKHLVTPGIQDSQKVVIRAGISAGDRVVTDGIDRLTEGAKVEVVEAQSATTPEEKATSREYAKKGARS</sequence>
<gene>
    <name evidence="1" type="primary">mdtA</name>
    <name type="ordered locus">E2348C_2217</name>
</gene>
<proteinExistence type="inferred from homology"/>
<name>MDTA_ECO27</name>
<keyword id="KW-0997">Cell inner membrane</keyword>
<keyword id="KW-1003">Cell membrane</keyword>
<keyword id="KW-0472">Membrane</keyword>
<keyword id="KW-1185">Reference proteome</keyword>
<keyword id="KW-0732">Signal</keyword>
<keyword id="KW-0813">Transport</keyword>
<accession>B7UTB2</accession>
<dbReference type="EMBL" id="FM180568">
    <property type="protein sequence ID" value="CAS09765.1"/>
    <property type="molecule type" value="Genomic_DNA"/>
</dbReference>
<dbReference type="RefSeq" id="WP_000678989.1">
    <property type="nucleotide sequence ID" value="NC_011601.1"/>
</dbReference>
<dbReference type="SMR" id="B7UTB2"/>
<dbReference type="KEGG" id="ecg:E2348C_2217"/>
<dbReference type="HOGENOM" id="CLU_018816_2_0_6"/>
<dbReference type="Proteomes" id="UP000008205">
    <property type="component" value="Chromosome"/>
</dbReference>
<dbReference type="GO" id="GO:1990281">
    <property type="term" value="C:efflux pump complex"/>
    <property type="evidence" value="ECO:0007669"/>
    <property type="project" value="TreeGrafter"/>
</dbReference>
<dbReference type="GO" id="GO:0005886">
    <property type="term" value="C:plasma membrane"/>
    <property type="evidence" value="ECO:0007669"/>
    <property type="project" value="UniProtKB-SubCell"/>
</dbReference>
<dbReference type="GO" id="GO:0015562">
    <property type="term" value="F:efflux transmembrane transporter activity"/>
    <property type="evidence" value="ECO:0007669"/>
    <property type="project" value="TreeGrafter"/>
</dbReference>
<dbReference type="FunFam" id="2.40.420.20:FF:000001">
    <property type="entry name" value="Efflux RND transporter periplasmic adaptor subunit"/>
    <property type="match status" value="1"/>
</dbReference>
<dbReference type="FunFam" id="1.10.287.470:FF:000005">
    <property type="entry name" value="Multidrug resistance protein MdtA"/>
    <property type="match status" value="1"/>
</dbReference>
<dbReference type="FunFam" id="2.40.30.170:FF:000006">
    <property type="entry name" value="Multidrug resistance protein MdtA"/>
    <property type="match status" value="1"/>
</dbReference>
<dbReference type="Gene3D" id="2.40.30.170">
    <property type="match status" value="1"/>
</dbReference>
<dbReference type="Gene3D" id="2.40.420.20">
    <property type="match status" value="1"/>
</dbReference>
<dbReference type="Gene3D" id="2.40.50.100">
    <property type="match status" value="1"/>
</dbReference>
<dbReference type="Gene3D" id="1.10.287.470">
    <property type="entry name" value="Helix hairpin bin"/>
    <property type="match status" value="1"/>
</dbReference>
<dbReference type="HAMAP" id="MF_01422">
    <property type="entry name" value="MdtA"/>
    <property type="match status" value="1"/>
</dbReference>
<dbReference type="InterPro" id="IPR032317">
    <property type="entry name" value="CusB_D23"/>
</dbReference>
<dbReference type="InterPro" id="IPR022824">
    <property type="entry name" value="Multidrug-R_MdtA"/>
</dbReference>
<dbReference type="InterPro" id="IPR006143">
    <property type="entry name" value="RND_pump_MFP"/>
</dbReference>
<dbReference type="NCBIfam" id="NF008589">
    <property type="entry name" value="PRK11556.1"/>
    <property type="match status" value="1"/>
</dbReference>
<dbReference type="NCBIfam" id="TIGR01730">
    <property type="entry name" value="RND_mfp"/>
    <property type="match status" value="1"/>
</dbReference>
<dbReference type="PANTHER" id="PTHR30469">
    <property type="entry name" value="MULTIDRUG RESISTANCE PROTEIN MDTA"/>
    <property type="match status" value="1"/>
</dbReference>
<dbReference type="PANTHER" id="PTHR30469:SF12">
    <property type="entry name" value="MULTIDRUG RESISTANCE PROTEIN MDTA"/>
    <property type="match status" value="1"/>
</dbReference>
<dbReference type="Pfam" id="PF16576">
    <property type="entry name" value="HlyD_D23"/>
    <property type="match status" value="1"/>
</dbReference>
<dbReference type="SUPFAM" id="SSF111369">
    <property type="entry name" value="HlyD-like secretion proteins"/>
    <property type="match status" value="1"/>
</dbReference>
<organism>
    <name type="scientific">Escherichia coli O127:H6 (strain E2348/69 / EPEC)</name>
    <dbReference type="NCBI Taxonomy" id="574521"/>
    <lineage>
        <taxon>Bacteria</taxon>
        <taxon>Pseudomonadati</taxon>
        <taxon>Pseudomonadota</taxon>
        <taxon>Gammaproteobacteria</taxon>
        <taxon>Enterobacterales</taxon>
        <taxon>Enterobacteriaceae</taxon>
        <taxon>Escherichia</taxon>
    </lineage>
</organism>
<protein>
    <recommendedName>
        <fullName evidence="1">Multidrug resistance protein MdtA</fullName>
    </recommendedName>
    <alternativeName>
        <fullName evidence="1">Multidrug transporter MdtA</fullName>
    </alternativeName>
</protein>
<reference key="1">
    <citation type="journal article" date="2009" name="J. Bacteriol.">
        <title>Complete genome sequence and comparative genome analysis of enteropathogenic Escherichia coli O127:H6 strain E2348/69.</title>
        <authorList>
            <person name="Iguchi A."/>
            <person name="Thomson N.R."/>
            <person name="Ogura Y."/>
            <person name="Saunders D."/>
            <person name="Ooka T."/>
            <person name="Henderson I.R."/>
            <person name="Harris D."/>
            <person name="Asadulghani M."/>
            <person name="Kurokawa K."/>
            <person name="Dean P."/>
            <person name="Kenny B."/>
            <person name="Quail M.A."/>
            <person name="Thurston S."/>
            <person name="Dougan G."/>
            <person name="Hayashi T."/>
            <person name="Parkhill J."/>
            <person name="Frankel G."/>
        </authorList>
    </citation>
    <scope>NUCLEOTIDE SEQUENCE [LARGE SCALE GENOMIC DNA]</scope>
    <source>
        <strain>E2348/69 / EPEC</strain>
    </source>
</reference>
<comment type="function">
    <text evidence="1">The MdtABC tripartite complex confers resistance against novobiocin and deoxycholate.</text>
</comment>
<comment type="subunit">
    <text evidence="1">Part of a tripartite efflux system composed of MdtA, MdtB and MdtC.</text>
</comment>
<comment type="subcellular location">
    <subcellularLocation>
        <location evidence="1">Cell inner membrane</location>
        <topology evidence="1">Peripheral membrane protein</topology>
    </subcellularLocation>
</comment>
<comment type="induction">
    <text evidence="1">The mdtABC operon is transcriptionally activated by BaeR.</text>
</comment>
<comment type="similarity">
    <text evidence="1">Belongs to the membrane fusion protein (MFP) (TC 8.A.1) family.</text>
</comment>